<sequence length="397" mass="43844">MEKTIAINAGSSSLKFQLYDMPSERVITAGIVERIGLKDSIFTITVDGEKIKEIIDIPDHEIAVQMLLEKLINHKVIGSYDEITGIGHRVVHGGERFPESVYIDDQVIKDIEALSELAPLHNPANVTGIKAFRKILPDVVSVAVFDTAFHQTMPPASYLYSLPYSYYEDYGIRKYGFHGTSHKYVSERAAELLGRPVEELRLLTCHLGNGASIAAIEGGKSMDTSMGFTPLAGVSMGTRSGNIDPALIPFIMEKTGKTAEQVLDVLNKESGMLGVSGISSDLRDLEDEAAKGNDRAELALQVFVDRIHKYIGSYAARMNGVDAIIFTAGIGENSSYIREKVLRGLEFMGVYWDPALNQVRGEERFLNYPHSPVKVIIIPTNEELMIARDVETIKQNH</sequence>
<proteinExistence type="inferred from homology"/>
<comment type="function">
    <text evidence="1">Catalyzes the formation of acetyl phosphate from acetate and ATP. Can also catalyze the reverse reaction.</text>
</comment>
<comment type="catalytic activity">
    <reaction evidence="1">
        <text>acetate + ATP = acetyl phosphate + ADP</text>
        <dbReference type="Rhea" id="RHEA:11352"/>
        <dbReference type="ChEBI" id="CHEBI:22191"/>
        <dbReference type="ChEBI" id="CHEBI:30089"/>
        <dbReference type="ChEBI" id="CHEBI:30616"/>
        <dbReference type="ChEBI" id="CHEBI:456216"/>
        <dbReference type="EC" id="2.7.2.1"/>
    </reaction>
</comment>
<comment type="cofactor">
    <cofactor evidence="1">
        <name>Mg(2+)</name>
        <dbReference type="ChEBI" id="CHEBI:18420"/>
    </cofactor>
    <cofactor evidence="1">
        <name>Mn(2+)</name>
        <dbReference type="ChEBI" id="CHEBI:29035"/>
    </cofactor>
    <text evidence="1">Mg(2+). Can also accept Mn(2+).</text>
</comment>
<comment type="pathway">
    <text evidence="1">Metabolic intermediate biosynthesis; acetyl-CoA biosynthesis; acetyl-CoA from acetate: step 1/2.</text>
</comment>
<comment type="subunit">
    <text evidence="1">Homodimer.</text>
</comment>
<comment type="subcellular location">
    <subcellularLocation>
        <location evidence="1">Cytoplasm</location>
    </subcellularLocation>
</comment>
<comment type="similarity">
    <text evidence="1">Belongs to the acetokinase family.</text>
</comment>
<name>ACKA1_LISIN</name>
<keyword id="KW-0067">ATP-binding</keyword>
<keyword id="KW-0963">Cytoplasm</keyword>
<keyword id="KW-0418">Kinase</keyword>
<keyword id="KW-0460">Magnesium</keyword>
<keyword id="KW-0479">Metal-binding</keyword>
<keyword id="KW-0547">Nucleotide-binding</keyword>
<keyword id="KW-0808">Transferase</keyword>
<feature type="chain" id="PRO_0000107575" description="Acetate kinase 1">
    <location>
        <begin position="1"/>
        <end position="397"/>
    </location>
</feature>
<feature type="active site" description="Proton donor/acceptor" evidence="1">
    <location>
        <position position="146"/>
    </location>
</feature>
<feature type="binding site" evidence="1">
    <location>
        <position position="8"/>
    </location>
    <ligand>
        <name>Mg(2+)</name>
        <dbReference type="ChEBI" id="CHEBI:18420"/>
    </ligand>
</feature>
<feature type="binding site" evidence="1">
    <location>
        <position position="15"/>
    </location>
    <ligand>
        <name>ATP</name>
        <dbReference type="ChEBI" id="CHEBI:30616"/>
    </ligand>
</feature>
<feature type="binding site" evidence="1">
    <location>
        <position position="89"/>
    </location>
    <ligand>
        <name>substrate</name>
    </ligand>
</feature>
<feature type="binding site" evidence="1">
    <location>
        <begin position="206"/>
        <end position="210"/>
    </location>
    <ligand>
        <name>ATP</name>
        <dbReference type="ChEBI" id="CHEBI:30616"/>
    </ligand>
</feature>
<feature type="binding site" evidence="1">
    <location>
        <begin position="281"/>
        <end position="283"/>
    </location>
    <ligand>
        <name>ATP</name>
        <dbReference type="ChEBI" id="CHEBI:30616"/>
    </ligand>
</feature>
<feature type="binding site" evidence="1">
    <location>
        <begin position="329"/>
        <end position="333"/>
    </location>
    <ligand>
        <name>ATP</name>
        <dbReference type="ChEBI" id="CHEBI:30616"/>
    </ligand>
</feature>
<feature type="binding site" evidence="1">
    <location>
        <position position="382"/>
    </location>
    <ligand>
        <name>Mg(2+)</name>
        <dbReference type="ChEBI" id="CHEBI:18420"/>
    </ligand>
</feature>
<feature type="site" description="Transition state stabilizer" evidence="1">
    <location>
        <position position="178"/>
    </location>
</feature>
<feature type="site" description="Transition state stabilizer" evidence="1">
    <location>
        <position position="239"/>
    </location>
</feature>
<organism>
    <name type="scientific">Listeria innocua serovar 6a (strain ATCC BAA-680 / CLIP 11262)</name>
    <dbReference type="NCBI Taxonomy" id="272626"/>
    <lineage>
        <taxon>Bacteria</taxon>
        <taxon>Bacillati</taxon>
        <taxon>Bacillota</taxon>
        <taxon>Bacilli</taxon>
        <taxon>Bacillales</taxon>
        <taxon>Listeriaceae</taxon>
        <taxon>Listeria</taxon>
    </lineage>
</organism>
<reference key="1">
    <citation type="journal article" date="2001" name="Science">
        <title>Comparative genomics of Listeria species.</title>
        <authorList>
            <person name="Glaser P."/>
            <person name="Frangeul L."/>
            <person name="Buchrieser C."/>
            <person name="Rusniok C."/>
            <person name="Amend A."/>
            <person name="Baquero F."/>
            <person name="Berche P."/>
            <person name="Bloecker H."/>
            <person name="Brandt P."/>
            <person name="Chakraborty T."/>
            <person name="Charbit A."/>
            <person name="Chetouani F."/>
            <person name="Couve E."/>
            <person name="de Daruvar A."/>
            <person name="Dehoux P."/>
            <person name="Domann E."/>
            <person name="Dominguez-Bernal G."/>
            <person name="Duchaud E."/>
            <person name="Durant L."/>
            <person name="Dussurget O."/>
            <person name="Entian K.-D."/>
            <person name="Fsihi H."/>
            <person name="Garcia-del Portillo F."/>
            <person name="Garrido P."/>
            <person name="Gautier L."/>
            <person name="Goebel W."/>
            <person name="Gomez-Lopez N."/>
            <person name="Hain T."/>
            <person name="Hauf J."/>
            <person name="Jackson D."/>
            <person name="Jones L.-M."/>
            <person name="Kaerst U."/>
            <person name="Kreft J."/>
            <person name="Kuhn M."/>
            <person name="Kunst F."/>
            <person name="Kurapkat G."/>
            <person name="Madueno E."/>
            <person name="Maitournam A."/>
            <person name="Mata Vicente J."/>
            <person name="Ng E."/>
            <person name="Nedjari H."/>
            <person name="Nordsiek G."/>
            <person name="Novella S."/>
            <person name="de Pablos B."/>
            <person name="Perez-Diaz J.-C."/>
            <person name="Purcell R."/>
            <person name="Remmel B."/>
            <person name="Rose M."/>
            <person name="Schlueter T."/>
            <person name="Simoes N."/>
            <person name="Tierrez A."/>
            <person name="Vazquez-Boland J.-A."/>
            <person name="Voss H."/>
            <person name="Wehland J."/>
            <person name="Cossart P."/>
        </authorList>
    </citation>
    <scope>NUCLEOTIDE SEQUENCE [LARGE SCALE GENOMIC DNA]</scope>
    <source>
        <strain>ATCC BAA-680 / CLIP 11262</strain>
    </source>
</reference>
<evidence type="ECO:0000255" key="1">
    <source>
        <dbReference type="HAMAP-Rule" id="MF_00020"/>
    </source>
</evidence>
<gene>
    <name evidence="1" type="primary">ackA1</name>
    <name type="ordered locus">lin1616</name>
</gene>
<protein>
    <recommendedName>
        <fullName evidence="1">Acetate kinase 1</fullName>
        <ecNumber evidence="1">2.7.2.1</ecNumber>
    </recommendedName>
    <alternativeName>
        <fullName evidence="1">Acetokinase 1</fullName>
    </alternativeName>
</protein>
<accession>Q92BD4</accession>
<dbReference type="EC" id="2.7.2.1" evidence="1"/>
<dbReference type="EMBL" id="AL596169">
    <property type="protein sequence ID" value="CAC96847.1"/>
    <property type="molecule type" value="Genomic_DNA"/>
</dbReference>
<dbReference type="PIR" id="AG1634">
    <property type="entry name" value="AG1634"/>
</dbReference>
<dbReference type="RefSeq" id="WP_010991613.1">
    <property type="nucleotide sequence ID" value="NC_003212.1"/>
</dbReference>
<dbReference type="SMR" id="Q92BD4"/>
<dbReference type="STRING" id="272626.gene:17565947"/>
<dbReference type="KEGG" id="lin:ackA"/>
<dbReference type="eggNOG" id="COG0282">
    <property type="taxonomic scope" value="Bacteria"/>
</dbReference>
<dbReference type="HOGENOM" id="CLU_020352_0_1_9"/>
<dbReference type="OrthoDB" id="9802453at2"/>
<dbReference type="UniPathway" id="UPA00340">
    <property type="reaction ID" value="UER00458"/>
</dbReference>
<dbReference type="Proteomes" id="UP000002513">
    <property type="component" value="Chromosome"/>
</dbReference>
<dbReference type="GO" id="GO:0005737">
    <property type="term" value="C:cytoplasm"/>
    <property type="evidence" value="ECO:0007669"/>
    <property type="project" value="UniProtKB-SubCell"/>
</dbReference>
<dbReference type="GO" id="GO:0008776">
    <property type="term" value="F:acetate kinase activity"/>
    <property type="evidence" value="ECO:0007669"/>
    <property type="project" value="UniProtKB-UniRule"/>
</dbReference>
<dbReference type="GO" id="GO:0005524">
    <property type="term" value="F:ATP binding"/>
    <property type="evidence" value="ECO:0007669"/>
    <property type="project" value="UniProtKB-KW"/>
</dbReference>
<dbReference type="GO" id="GO:0000287">
    <property type="term" value="F:magnesium ion binding"/>
    <property type="evidence" value="ECO:0007669"/>
    <property type="project" value="UniProtKB-UniRule"/>
</dbReference>
<dbReference type="GO" id="GO:0006083">
    <property type="term" value="P:acetate metabolic process"/>
    <property type="evidence" value="ECO:0007669"/>
    <property type="project" value="TreeGrafter"/>
</dbReference>
<dbReference type="GO" id="GO:0006085">
    <property type="term" value="P:acetyl-CoA biosynthetic process"/>
    <property type="evidence" value="ECO:0007669"/>
    <property type="project" value="UniProtKB-UniRule"/>
</dbReference>
<dbReference type="CDD" id="cd24010">
    <property type="entry name" value="ASKHA_NBD_AcK_PK"/>
    <property type="match status" value="1"/>
</dbReference>
<dbReference type="Gene3D" id="3.30.420.40">
    <property type="match status" value="2"/>
</dbReference>
<dbReference type="HAMAP" id="MF_00020">
    <property type="entry name" value="Acetate_kinase"/>
    <property type="match status" value="1"/>
</dbReference>
<dbReference type="InterPro" id="IPR004372">
    <property type="entry name" value="Ac/propionate_kinase"/>
</dbReference>
<dbReference type="InterPro" id="IPR000890">
    <property type="entry name" value="Aliphatic_acid_kin_short-chain"/>
</dbReference>
<dbReference type="InterPro" id="IPR023865">
    <property type="entry name" value="Aliphatic_acid_kinase_CS"/>
</dbReference>
<dbReference type="InterPro" id="IPR043129">
    <property type="entry name" value="ATPase_NBD"/>
</dbReference>
<dbReference type="NCBIfam" id="TIGR00016">
    <property type="entry name" value="ackA"/>
    <property type="match status" value="1"/>
</dbReference>
<dbReference type="PANTHER" id="PTHR21060">
    <property type="entry name" value="ACETATE KINASE"/>
    <property type="match status" value="1"/>
</dbReference>
<dbReference type="PANTHER" id="PTHR21060:SF15">
    <property type="entry name" value="ACETATE KINASE-RELATED"/>
    <property type="match status" value="1"/>
</dbReference>
<dbReference type="Pfam" id="PF00871">
    <property type="entry name" value="Acetate_kinase"/>
    <property type="match status" value="1"/>
</dbReference>
<dbReference type="PIRSF" id="PIRSF000722">
    <property type="entry name" value="Acetate_prop_kin"/>
    <property type="match status" value="1"/>
</dbReference>
<dbReference type="PRINTS" id="PR00471">
    <property type="entry name" value="ACETATEKNASE"/>
</dbReference>
<dbReference type="SUPFAM" id="SSF53067">
    <property type="entry name" value="Actin-like ATPase domain"/>
    <property type="match status" value="2"/>
</dbReference>
<dbReference type="PROSITE" id="PS01075">
    <property type="entry name" value="ACETATE_KINASE_1"/>
    <property type="match status" value="1"/>
</dbReference>
<dbReference type="PROSITE" id="PS01076">
    <property type="entry name" value="ACETATE_KINASE_2"/>
    <property type="match status" value="1"/>
</dbReference>